<sequence>MSYYAFEGLIPVVHPEAYVHPSAVLIGDVIVGAGVYIGPLASLRGDYGRLILEAGANLQDGCIMHGYCDTDTIVHENGHIGHGAILHGCVIGRDALVGMNSVIMDGAIIGEESIVAAMSFVKAGFVGAPRQLLVGAPARVKRDVTDEELHWKRLNTQEYQDLAVRCRASLCETQPLTQVEKNRPRLKGTTEVKPKSA</sequence>
<gene>
    <name evidence="1" type="primary">caiE</name>
    <name type="ordered locus">CKO_03348</name>
</gene>
<keyword id="KW-1185">Reference proteome</keyword>
<keyword id="KW-0677">Repeat</keyword>
<keyword id="KW-0808">Transferase</keyword>
<comment type="function">
    <text evidence="1">Overproduction of CaiE stimulates the activity of CaiB and CaiD.</text>
</comment>
<comment type="pathway">
    <text evidence="1">Amine and polyamine metabolism; carnitine metabolism.</text>
</comment>
<comment type="similarity">
    <text evidence="1">Belongs to the transferase hexapeptide repeat family.</text>
</comment>
<dbReference type="EMBL" id="CP000822">
    <property type="protein sequence ID" value="ABV14431.1"/>
    <property type="molecule type" value="Genomic_DNA"/>
</dbReference>
<dbReference type="RefSeq" id="WP_012134134.1">
    <property type="nucleotide sequence ID" value="NC_009792.1"/>
</dbReference>
<dbReference type="SMR" id="A8ALR8"/>
<dbReference type="STRING" id="290338.CKO_03348"/>
<dbReference type="GeneID" id="45137111"/>
<dbReference type="KEGG" id="cko:CKO_03348"/>
<dbReference type="HOGENOM" id="CLU_064827_4_2_6"/>
<dbReference type="OrthoDB" id="9803036at2"/>
<dbReference type="UniPathway" id="UPA00117"/>
<dbReference type="Proteomes" id="UP000008148">
    <property type="component" value="Chromosome"/>
</dbReference>
<dbReference type="GO" id="GO:0016740">
    <property type="term" value="F:transferase activity"/>
    <property type="evidence" value="ECO:0007669"/>
    <property type="project" value="UniProtKB-KW"/>
</dbReference>
<dbReference type="GO" id="GO:0009437">
    <property type="term" value="P:carnitine metabolic process"/>
    <property type="evidence" value="ECO:0007669"/>
    <property type="project" value="UniProtKB-UniRule"/>
</dbReference>
<dbReference type="CDD" id="cd04745">
    <property type="entry name" value="LbH_paaY_like"/>
    <property type="match status" value="1"/>
</dbReference>
<dbReference type="FunFam" id="2.160.10.10:FF:000012">
    <property type="entry name" value="Carnitine operon protein CaiE"/>
    <property type="match status" value="1"/>
</dbReference>
<dbReference type="Gene3D" id="2.160.10.10">
    <property type="entry name" value="Hexapeptide repeat proteins"/>
    <property type="match status" value="1"/>
</dbReference>
<dbReference type="HAMAP" id="MF_01525">
    <property type="entry name" value="CaiE"/>
    <property type="match status" value="1"/>
</dbReference>
<dbReference type="InterPro" id="IPR023446">
    <property type="entry name" value="CaiE"/>
</dbReference>
<dbReference type="InterPro" id="IPR001451">
    <property type="entry name" value="Hexapep"/>
</dbReference>
<dbReference type="InterPro" id="IPR050484">
    <property type="entry name" value="Transf_Hexapept/Carb_Anhydrase"/>
</dbReference>
<dbReference type="InterPro" id="IPR011004">
    <property type="entry name" value="Trimer_LpxA-like_sf"/>
</dbReference>
<dbReference type="NCBIfam" id="NF010150">
    <property type="entry name" value="PRK13627.1"/>
    <property type="match status" value="1"/>
</dbReference>
<dbReference type="PANTHER" id="PTHR13061">
    <property type="entry name" value="DYNACTIN SUBUNIT P25"/>
    <property type="match status" value="1"/>
</dbReference>
<dbReference type="PANTHER" id="PTHR13061:SF29">
    <property type="entry name" value="GAMMA CARBONIC ANHYDRASE-LIKE 1, MITOCHONDRIAL-RELATED"/>
    <property type="match status" value="1"/>
</dbReference>
<dbReference type="Pfam" id="PF00132">
    <property type="entry name" value="Hexapep"/>
    <property type="match status" value="1"/>
</dbReference>
<dbReference type="SUPFAM" id="SSF51161">
    <property type="entry name" value="Trimeric LpxA-like enzymes"/>
    <property type="match status" value="1"/>
</dbReference>
<feature type="chain" id="PRO_1000068655" description="Carnitine operon protein CaiE">
    <location>
        <begin position="1"/>
        <end position="197"/>
    </location>
</feature>
<protein>
    <recommendedName>
        <fullName evidence="1">Carnitine operon protein CaiE</fullName>
    </recommendedName>
</protein>
<evidence type="ECO:0000255" key="1">
    <source>
        <dbReference type="HAMAP-Rule" id="MF_01525"/>
    </source>
</evidence>
<reference key="1">
    <citation type="submission" date="2007-08" db="EMBL/GenBank/DDBJ databases">
        <authorList>
            <consortium name="The Citrobacter koseri Genome Sequencing Project"/>
            <person name="McClelland M."/>
            <person name="Sanderson E.K."/>
            <person name="Porwollik S."/>
            <person name="Spieth J."/>
            <person name="Clifton W.S."/>
            <person name="Latreille P."/>
            <person name="Courtney L."/>
            <person name="Wang C."/>
            <person name="Pepin K."/>
            <person name="Bhonagiri V."/>
            <person name="Nash W."/>
            <person name="Johnson M."/>
            <person name="Thiruvilangam P."/>
            <person name="Wilson R."/>
        </authorList>
    </citation>
    <scope>NUCLEOTIDE SEQUENCE [LARGE SCALE GENOMIC DNA]</scope>
    <source>
        <strain>ATCC BAA-895 / CDC 4225-83 / SGSC4696</strain>
    </source>
</reference>
<accession>A8ALR8</accession>
<organism>
    <name type="scientific">Citrobacter koseri (strain ATCC BAA-895 / CDC 4225-83 / SGSC4696)</name>
    <dbReference type="NCBI Taxonomy" id="290338"/>
    <lineage>
        <taxon>Bacteria</taxon>
        <taxon>Pseudomonadati</taxon>
        <taxon>Pseudomonadota</taxon>
        <taxon>Gammaproteobacteria</taxon>
        <taxon>Enterobacterales</taxon>
        <taxon>Enterobacteriaceae</taxon>
        <taxon>Citrobacter</taxon>
    </lineage>
</organism>
<name>CAIE_CITK8</name>
<proteinExistence type="inferred from homology"/>